<comment type="function">
    <text evidence="1">ATP-dependent specificity component of the Clp protease. It directs the protease to specific substrates. Can perform chaperone functions in the absence of ClpP.</text>
</comment>
<comment type="subunit">
    <text evidence="1">Component of the ClpX-ClpP complex. Forms a hexameric ring that, in the presence of ATP, binds to fourteen ClpP subunits assembled into a disk-like structure with a central cavity, resembling the structure of eukaryotic proteasomes.</text>
</comment>
<comment type="similarity">
    <text evidence="1">Belongs to the ClpX chaperone family.</text>
</comment>
<organism>
    <name type="scientific">Buchnera aphidicola subsp. Acyrthosiphon pisum (strain Tuc7)</name>
    <dbReference type="NCBI Taxonomy" id="561501"/>
    <lineage>
        <taxon>Bacteria</taxon>
        <taxon>Pseudomonadati</taxon>
        <taxon>Pseudomonadota</taxon>
        <taxon>Gammaproteobacteria</taxon>
        <taxon>Enterobacterales</taxon>
        <taxon>Erwiniaceae</taxon>
        <taxon>Buchnera</taxon>
    </lineage>
</organism>
<gene>
    <name evidence="1" type="primary">clpX</name>
    <name type="ordered locus">BUAPTUC7_470</name>
</gene>
<reference key="1">
    <citation type="journal article" date="2009" name="Science">
        <title>The dynamics and time scale of ongoing genomic erosion in symbiotic bacteria.</title>
        <authorList>
            <person name="Moran N.A."/>
            <person name="McLaughlin H.J."/>
            <person name="Sorek R."/>
        </authorList>
    </citation>
    <scope>NUCLEOTIDE SEQUENCE [LARGE SCALE GENOMIC DNA]</scope>
    <source>
        <strain>Tuc7</strain>
    </source>
</reference>
<dbReference type="EMBL" id="CP001158">
    <property type="protein sequence ID" value="ACL30270.1"/>
    <property type="molecule type" value="Genomic_DNA"/>
</dbReference>
<dbReference type="RefSeq" id="WP_012619565.1">
    <property type="nucleotide sequence ID" value="NC_011834.1"/>
</dbReference>
<dbReference type="SMR" id="B8D805"/>
<dbReference type="KEGG" id="bau:BUAPTUC7_470"/>
<dbReference type="HOGENOM" id="CLU_014218_8_2_6"/>
<dbReference type="GO" id="GO:0009376">
    <property type="term" value="C:HslUV protease complex"/>
    <property type="evidence" value="ECO:0007669"/>
    <property type="project" value="TreeGrafter"/>
</dbReference>
<dbReference type="GO" id="GO:0005524">
    <property type="term" value="F:ATP binding"/>
    <property type="evidence" value="ECO:0007669"/>
    <property type="project" value="UniProtKB-UniRule"/>
</dbReference>
<dbReference type="GO" id="GO:0016887">
    <property type="term" value="F:ATP hydrolysis activity"/>
    <property type="evidence" value="ECO:0007669"/>
    <property type="project" value="InterPro"/>
</dbReference>
<dbReference type="GO" id="GO:0140662">
    <property type="term" value="F:ATP-dependent protein folding chaperone"/>
    <property type="evidence" value="ECO:0007669"/>
    <property type="project" value="InterPro"/>
</dbReference>
<dbReference type="GO" id="GO:0046983">
    <property type="term" value="F:protein dimerization activity"/>
    <property type="evidence" value="ECO:0007669"/>
    <property type="project" value="InterPro"/>
</dbReference>
<dbReference type="GO" id="GO:0051082">
    <property type="term" value="F:unfolded protein binding"/>
    <property type="evidence" value="ECO:0007669"/>
    <property type="project" value="UniProtKB-UniRule"/>
</dbReference>
<dbReference type="GO" id="GO:0008270">
    <property type="term" value="F:zinc ion binding"/>
    <property type="evidence" value="ECO:0007669"/>
    <property type="project" value="InterPro"/>
</dbReference>
<dbReference type="GO" id="GO:0051301">
    <property type="term" value="P:cell division"/>
    <property type="evidence" value="ECO:0007669"/>
    <property type="project" value="TreeGrafter"/>
</dbReference>
<dbReference type="GO" id="GO:0051603">
    <property type="term" value="P:proteolysis involved in protein catabolic process"/>
    <property type="evidence" value="ECO:0007669"/>
    <property type="project" value="TreeGrafter"/>
</dbReference>
<dbReference type="CDD" id="cd19497">
    <property type="entry name" value="RecA-like_ClpX"/>
    <property type="match status" value="1"/>
</dbReference>
<dbReference type="FunFam" id="1.10.8.60:FF:000002">
    <property type="entry name" value="ATP-dependent Clp protease ATP-binding subunit ClpX"/>
    <property type="match status" value="1"/>
</dbReference>
<dbReference type="FunFam" id="3.40.50.300:FF:000005">
    <property type="entry name" value="ATP-dependent Clp protease ATP-binding subunit ClpX"/>
    <property type="match status" value="1"/>
</dbReference>
<dbReference type="Gene3D" id="1.10.8.60">
    <property type="match status" value="1"/>
</dbReference>
<dbReference type="Gene3D" id="6.20.220.10">
    <property type="entry name" value="ClpX chaperone, C4-type zinc finger domain"/>
    <property type="match status" value="1"/>
</dbReference>
<dbReference type="Gene3D" id="3.40.50.300">
    <property type="entry name" value="P-loop containing nucleotide triphosphate hydrolases"/>
    <property type="match status" value="1"/>
</dbReference>
<dbReference type="HAMAP" id="MF_00175">
    <property type="entry name" value="ClpX"/>
    <property type="match status" value="1"/>
</dbReference>
<dbReference type="InterPro" id="IPR003593">
    <property type="entry name" value="AAA+_ATPase"/>
</dbReference>
<dbReference type="InterPro" id="IPR050052">
    <property type="entry name" value="ATP-dep_Clp_protease_ClpX"/>
</dbReference>
<dbReference type="InterPro" id="IPR003959">
    <property type="entry name" value="ATPase_AAA_core"/>
</dbReference>
<dbReference type="InterPro" id="IPR019489">
    <property type="entry name" value="Clp_ATPase_C"/>
</dbReference>
<dbReference type="InterPro" id="IPR004487">
    <property type="entry name" value="Clp_protease_ATP-bd_su_ClpX"/>
</dbReference>
<dbReference type="InterPro" id="IPR046425">
    <property type="entry name" value="ClpX_bact"/>
</dbReference>
<dbReference type="InterPro" id="IPR027417">
    <property type="entry name" value="P-loop_NTPase"/>
</dbReference>
<dbReference type="InterPro" id="IPR010603">
    <property type="entry name" value="Znf_CppX_C4"/>
</dbReference>
<dbReference type="InterPro" id="IPR038366">
    <property type="entry name" value="Znf_CppX_C4_sf"/>
</dbReference>
<dbReference type="NCBIfam" id="TIGR00382">
    <property type="entry name" value="clpX"/>
    <property type="match status" value="1"/>
</dbReference>
<dbReference type="NCBIfam" id="NF003745">
    <property type="entry name" value="PRK05342.1"/>
    <property type="match status" value="1"/>
</dbReference>
<dbReference type="PANTHER" id="PTHR48102:SF7">
    <property type="entry name" value="ATP-DEPENDENT CLP PROTEASE ATP-BINDING SUBUNIT CLPX-LIKE, MITOCHONDRIAL"/>
    <property type="match status" value="1"/>
</dbReference>
<dbReference type="PANTHER" id="PTHR48102">
    <property type="entry name" value="ATP-DEPENDENT CLP PROTEASE ATP-BINDING SUBUNIT CLPX-LIKE, MITOCHONDRIAL-RELATED"/>
    <property type="match status" value="1"/>
</dbReference>
<dbReference type="Pfam" id="PF07724">
    <property type="entry name" value="AAA_2"/>
    <property type="match status" value="1"/>
</dbReference>
<dbReference type="Pfam" id="PF10431">
    <property type="entry name" value="ClpB_D2-small"/>
    <property type="match status" value="1"/>
</dbReference>
<dbReference type="Pfam" id="PF06689">
    <property type="entry name" value="zf-C4_ClpX"/>
    <property type="match status" value="1"/>
</dbReference>
<dbReference type="SMART" id="SM00382">
    <property type="entry name" value="AAA"/>
    <property type="match status" value="1"/>
</dbReference>
<dbReference type="SMART" id="SM01086">
    <property type="entry name" value="ClpB_D2-small"/>
    <property type="match status" value="1"/>
</dbReference>
<dbReference type="SMART" id="SM00994">
    <property type="entry name" value="zf-C4_ClpX"/>
    <property type="match status" value="1"/>
</dbReference>
<dbReference type="SUPFAM" id="SSF57716">
    <property type="entry name" value="Glucocorticoid receptor-like (DNA-binding domain)"/>
    <property type="match status" value="1"/>
</dbReference>
<dbReference type="SUPFAM" id="SSF52540">
    <property type="entry name" value="P-loop containing nucleoside triphosphate hydrolases"/>
    <property type="match status" value="1"/>
</dbReference>
<dbReference type="PROSITE" id="PS51902">
    <property type="entry name" value="CLPX_ZB"/>
    <property type="match status" value="1"/>
</dbReference>
<name>CLPX_BUCAT</name>
<sequence>MTDKSKDNSKSLLYCSFCGKNQKEVQKLIAGPKVYICDECIRLCNDIITEETIKQNNITDTENKINYLPKPHEIKKHLDNYVIGQNYTKKVLSVAVYNHYKRLYNFNKKTDSVELGKSNILLIGPTGSGKTLLAQTLAKLLDVPFTITDATTLTEAGYVGEDVENVIQKLLQKCKYNVKKAELGIVYIDEIDKIARKSDNPSITRDVSGEGVQQALLKLIEGTLASIPPQGGRKHPQQEFLQVNTSNILFICAGTFSELSKIVSKRLDAGTEIGFKANIKEKKQKKSEDFLLKQVEPEDLIKFGLIPEFIGRLPIITILNKLTEDALVNILCKPKNALIKQYQTLFELENVKLEFNAESIQLIAKKAINKNTGARGLRSIIEGILLNIMYELPSMVNIEKILINESVVNSNSLPKIIYGKNKSKKASGE</sequence>
<accession>B8D805</accession>
<evidence type="ECO:0000255" key="1">
    <source>
        <dbReference type="HAMAP-Rule" id="MF_00175"/>
    </source>
</evidence>
<evidence type="ECO:0000255" key="2">
    <source>
        <dbReference type="PROSITE-ProRule" id="PRU01250"/>
    </source>
</evidence>
<proteinExistence type="inferred from homology"/>
<keyword id="KW-0067">ATP-binding</keyword>
<keyword id="KW-0143">Chaperone</keyword>
<keyword id="KW-0479">Metal-binding</keyword>
<keyword id="KW-0547">Nucleotide-binding</keyword>
<keyword id="KW-0862">Zinc</keyword>
<feature type="chain" id="PRO_1000123826" description="ATP-dependent Clp protease ATP-binding subunit ClpX">
    <location>
        <begin position="1"/>
        <end position="429"/>
    </location>
</feature>
<feature type="domain" description="ClpX-type ZB" evidence="2">
    <location>
        <begin position="2"/>
        <end position="56"/>
    </location>
</feature>
<feature type="binding site" evidence="2">
    <location>
        <position position="15"/>
    </location>
    <ligand>
        <name>Zn(2+)</name>
        <dbReference type="ChEBI" id="CHEBI:29105"/>
    </ligand>
</feature>
<feature type="binding site" evidence="2">
    <location>
        <position position="18"/>
    </location>
    <ligand>
        <name>Zn(2+)</name>
        <dbReference type="ChEBI" id="CHEBI:29105"/>
    </ligand>
</feature>
<feature type="binding site" evidence="2">
    <location>
        <position position="37"/>
    </location>
    <ligand>
        <name>Zn(2+)</name>
        <dbReference type="ChEBI" id="CHEBI:29105"/>
    </ligand>
</feature>
<feature type="binding site" evidence="2">
    <location>
        <position position="40"/>
    </location>
    <ligand>
        <name>Zn(2+)</name>
        <dbReference type="ChEBI" id="CHEBI:29105"/>
    </ligand>
</feature>
<feature type="binding site" evidence="1">
    <location>
        <begin position="125"/>
        <end position="132"/>
    </location>
    <ligand>
        <name>ATP</name>
        <dbReference type="ChEBI" id="CHEBI:30616"/>
    </ligand>
</feature>
<protein>
    <recommendedName>
        <fullName evidence="1">ATP-dependent Clp protease ATP-binding subunit ClpX</fullName>
    </recommendedName>
</protein>